<organism>
    <name type="scientific">Neurospora crassa (strain ATCC 24698 / 74-OR23-1A / CBS 708.71 / DSM 1257 / FGSC 987)</name>
    <dbReference type="NCBI Taxonomy" id="367110"/>
    <lineage>
        <taxon>Eukaryota</taxon>
        <taxon>Fungi</taxon>
        <taxon>Dikarya</taxon>
        <taxon>Ascomycota</taxon>
        <taxon>Pezizomycotina</taxon>
        <taxon>Sordariomycetes</taxon>
        <taxon>Sordariomycetidae</taxon>
        <taxon>Sordariales</taxon>
        <taxon>Sordariaceae</taxon>
        <taxon>Neurospora</taxon>
    </lineage>
</organism>
<protein>
    <recommendedName>
        <fullName evidence="4">Small ribosomal subunit protein mS35</fullName>
    </recommendedName>
    <alternativeName>
        <fullName evidence="1">37S ribosomal protein S24, mitochondrial</fullName>
    </alternativeName>
</protein>
<name>RT24_NEUCR</name>
<accession>Q1K5Z0</accession>
<proteinExistence type="evidence at protein level"/>
<evidence type="ECO:0000255" key="1">
    <source>
        <dbReference type="PIRNR" id="PIRNR036995"/>
    </source>
</evidence>
<evidence type="ECO:0000256" key="2">
    <source>
        <dbReference type="SAM" id="MobiDB-lite"/>
    </source>
</evidence>
<evidence type="ECO:0000269" key="3">
    <source>
    </source>
</evidence>
<evidence type="ECO:0000303" key="4">
    <source>
    </source>
</evidence>
<evidence type="ECO:0000305" key="5"/>
<evidence type="ECO:0000305" key="6">
    <source>
    </source>
</evidence>
<evidence type="ECO:0007744" key="7">
    <source>
        <dbReference type="PDB" id="6YW5"/>
    </source>
</evidence>
<evidence type="ECO:0007744" key="8">
    <source>
        <dbReference type="PDB" id="6YWX"/>
    </source>
</evidence>
<reference key="1">
    <citation type="journal article" date="2003" name="Nature">
        <title>The genome sequence of the filamentous fungus Neurospora crassa.</title>
        <authorList>
            <person name="Galagan J.E."/>
            <person name="Calvo S.E."/>
            <person name="Borkovich K.A."/>
            <person name="Selker E.U."/>
            <person name="Read N.D."/>
            <person name="Jaffe D.B."/>
            <person name="FitzHugh W."/>
            <person name="Ma L.-J."/>
            <person name="Smirnov S."/>
            <person name="Purcell S."/>
            <person name="Rehman B."/>
            <person name="Elkins T."/>
            <person name="Engels R."/>
            <person name="Wang S."/>
            <person name="Nielsen C.B."/>
            <person name="Butler J."/>
            <person name="Endrizzi M."/>
            <person name="Qui D."/>
            <person name="Ianakiev P."/>
            <person name="Bell-Pedersen D."/>
            <person name="Nelson M.A."/>
            <person name="Werner-Washburne M."/>
            <person name="Selitrennikoff C.P."/>
            <person name="Kinsey J.A."/>
            <person name="Braun E.L."/>
            <person name="Zelter A."/>
            <person name="Schulte U."/>
            <person name="Kothe G.O."/>
            <person name="Jedd G."/>
            <person name="Mewes H.-W."/>
            <person name="Staben C."/>
            <person name="Marcotte E."/>
            <person name="Greenberg D."/>
            <person name="Roy A."/>
            <person name="Foley K."/>
            <person name="Naylor J."/>
            <person name="Stange-Thomann N."/>
            <person name="Barrett R."/>
            <person name="Gnerre S."/>
            <person name="Kamal M."/>
            <person name="Kamvysselis M."/>
            <person name="Mauceli E.W."/>
            <person name="Bielke C."/>
            <person name="Rudd S."/>
            <person name="Frishman D."/>
            <person name="Krystofova S."/>
            <person name="Rasmussen C."/>
            <person name="Metzenberg R.L."/>
            <person name="Perkins D.D."/>
            <person name="Kroken S."/>
            <person name="Cogoni C."/>
            <person name="Macino G."/>
            <person name="Catcheside D.E.A."/>
            <person name="Li W."/>
            <person name="Pratt R.J."/>
            <person name="Osmani S.A."/>
            <person name="DeSouza C.P.C."/>
            <person name="Glass N.L."/>
            <person name="Orbach M.J."/>
            <person name="Berglund J.A."/>
            <person name="Voelker R."/>
            <person name="Yarden O."/>
            <person name="Plamann M."/>
            <person name="Seiler S."/>
            <person name="Dunlap J.C."/>
            <person name="Radford A."/>
            <person name="Aramayo R."/>
            <person name="Natvig D.O."/>
            <person name="Alex L.A."/>
            <person name="Mannhaupt G."/>
            <person name="Ebbole D.J."/>
            <person name="Freitag M."/>
            <person name="Paulsen I."/>
            <person name="Sachs M.S."/>
            <person name="Lander E.S."/>
            <person name="Nusbaum C."/>
            <person name="Birren B.W."/>
        </authorList>
    </citation>
    <scope>NUCLEOTIDE SEQUENCE [LARGE SCALE GENOMIC DNA]</scope>
    <source>
        <strain>ATCC 24698 / 74-OR23-1A / CBS 708.71 / DSM 1257 / FGSC 987</strain>
    </source>
</reference>
<reference evidence="7 8" key="2">
    <citation type="journal article" date="2020" name="Nat. Commun.">
        <title>Analysis of translating mitoribosome reveals functional characteristics of translation in mitochondria of fungi.</title>
        <authorList>
            <person name="Itoh Y."/>
            <person name="Naschberger A."/>
            <person name="Mortezaei N."/>
            <person name="Herrmann J.M."/>
            <person name="Amunts A."/>
        </authorList>
    </citation>
    <scope>STRUCTURE BY ELECTRON MICROSCOPY (2.85 ANGSTROMS)</scope>
</reference>
<comment type="function">
    <text evidence="6">Component of the mitochondrial ribosome (mitoribosome), a dedicated translation machinery responsible for the synthesis of mitochondrial genome-encoded proteins, including at least some of the essential transmembrane subunits of the mitochondrial respiratory chain. The mitoribosomes are attached to the mitochondrial inner membrane and translation products are cotranslationally integrated into the membrane.</text>
</comment>
<comment type="subunit">
    <text evidence="3">Component of the mitochondrial small ribosomal subunit (mt-SSU). Mature N.crassa 74S mitochondrial ribosomes consist of a small (37S) and a large (54S) subunit. The 37S small subunit contains a 16S ribosomal RNA (16S mt-rRNA) and 32 different proteins. The 54S large subunit contains a 23S rRNA (23S mt-rRNA) and 42 different proteins.</text>
</comment>
<comment type="subcellular location">
    <subcellularLocation>
        <location evidence="3">Mitochondrion</location>
    </subcellularLocation>
</comment>
<comment type="similarity">
    <text evidence="5">Belongs to the mitochondrion-specific ribosomal protein mS35 family.</text>
</comment>
<sequence length="382" mass="43983">MASSANALRLGLRTCSRPTQTSNLRIAALQRRALSATATRCEGVPVPKREDDAKLEFTRPYNPGEFLSEKLRSDDLQDWERERYERALTSWEQTPDDLKRGWSTMIRDIEQAAAPLRRVVMPRRSTFWYEEEKDTDLITNEDGEDDFHENDIMSLGHGKLEEHREFREYARIAVWEMPLLSKYAKPFVPPTSEEVLRFRYTTYMGEFHPADRKVVVEFCPKDLRDLSEVQQRKLMKLAGPRYNPEKDIIKMSCEKFEHQAQNKRYLGDLIEKMIAAAKDPKDTFEDIPLDTRHHTFTKKISFPKEWLLTEERKKELEAARQQALLKDAEKVVQGALVDGADVVKQYLESGAAEALHAVPVMAGRGGKALPGGKGGKMQRSKR</sequence>
<gene>
    <name type="primary">rsm24</name>
    <name type="ORF">NCU03926</name>
</gene>
<keyword id="KW-0002">3D-structure</keyword>
<keyword id="KW-0496">Mitochondrion</keyword>
<keyword id="KW-1185">Reference proteome</keyword>
<keyword id="KW-0687">Ribonucleoprotein</keyword>
<keyword id="KW-0689">Ribosomal protein</keyword>
<feature type="chain" id="PRO_0000458560" description="Small ribosomal subunit protein mS35">
    <location>
        <begin position="1"/>
        <end position="382"/>
    </location>
</feature>
<feature type="region of interest" description="Disordered" evidence="2">
    <location>
        <begin position="363"/>
        <end position="382"/>
    </location>
</feature>
<feature type="compositionally biased region" description="Gly residues" evidence="2">
    <location>
        <begin position="363"/>
        <end position="375"/>
    </location>
</feature>
<dbReference type="EMBL" id="CM002241">
    <property type="protein sequence ID" value="EAA28329.3"/>
    <property type="molecule type" value="Genomic_DNA"/>
</dbReference>
<dbReference type="RefSeq" id="XP_957565.3">
    <property type="nucleotide sequence ID" value="XM_952472.3"/>
</dbReference>
<dbReference type="PDB" id="6YW5">
    <property type="method" value="EM"/>
    <property type="resolution" value="2.85 A"/>
    <property type="chains" value="ZZ=1-382"/>
</dbReference>
<dbReference type="PDB" id="6YWX">
    <property type="method" value="EM"/>
    <property type="resolution" value="3.10 A"/>
    <property type="chains" value="ZZ=1-382"/>
</dbReference>
<dbReference type="PDBsum" id="6YW5"/>
<dbReference type="PDBsum" id="6YWX"/>
<dbReference type="EMDB" id="EMD-10958"/>
<dbReference type="EMDB" id="EMD-10978"/>
<dbReference type="SMR" id="Q1K5Z0"/>
<dbReference type="STRING" id="367110.Q1K5Z0"/>
<dbReference type="PaxDb" id="5141-EFNCRP00000003723"/>
<dbReference type="EnsemblFungi" id="EAA28329">
    <property type="protein sequence ID" value="EAA28329"/>
    <property type="gene ID" value="NCU03926"/>
</dbReference>
<dbReference type="GeneID" id="3873750"/>
<dbReference type="KEGG" id="ncr:NCU03926"/>
<dbReference type="VEuPathDB" id="FungiDB:NCU03926"/>
<dbReference type="HOGENOM" id="CLU_051514_0_0_1"/>
<dbReference type="InParanoid" id="Q1K5Z0"/>
<dbReference type="OrthoDB" id="283424at2759"/>
<dbReference type="Proteomes" id="UP000001805">
    <property type="component" value="Chromosome 5, Linkage Group VI"/>
</dbReference>
<dbReference type="GO" id="GO:0005763">
    <property type="term" value="C:mitochondrial small ribosomal subunit"/>
    <property type="evidence" value="ECO:0000318"/>
    <property type="project" value="GO_Central"/>
</dbReference>
<dbReference type="GO" id="GO:0003735">
    <property type="term" value="F:structural constituent of ribosome"/>
    <property type="evidence" value="ECO:0000318"/>
    <property type="project" value="GO_Central"/>
</dbReference>
<dbReference type="GO" id="GO:0032543">
    <property type="term" value="P:mitochondrial translation"/>
    <property type="evidence" value="ECO:0007669"/>
    <property type="project" value="InterPro"/>
</dbReference>
<dbReference type="InterPro" id="IPR017081">
    <property type="entry name" value="Ribosomal_mS35"/>
</dbReference>
<dbReference type="InterPro" id="IPR019349">
    <property type="entry name" value="Ribosomal_mS35_mit"/>
</dbReference>
<dbReference type="InterPro" id="IPR039848">
    <property type="entry name" value="Ribosomal_mS35_mt"/>
</dbReference>
<dbReference type="PANTHER" id="PTHR13490">
    <property type="entry name" value="MITOCHONDRIAL 28S RIBOSOMAL PROTEIN S28"/>
    <property type="match status" value="1"/>
</dbReference>
<dbReference type="PANTHER" id="PTHR13490:SF0">
    <property type="entry name" value="SMALL RIBOSOMAL SUBUNIT PROTEIN MS35"/>
    <property type="match status" value="1"/>
</dbReference>
<dbReference type="Pfam" id="PF10213">
    <property type="entry name" value="MRP-S28"/>
    <property type="match status" value="1"/>
</dbReference>
<dbReference type="PIRSF" id="PIRSF036995">
    <property type="entry name" value="RSM24"/>
    <property type="match status" value="1"/>
</dbReference>